<comment type="function">
    <text evidence="1">Vacuolar effluxer which mediate the efflux of amino acids resulting from autophagic degradation. The release of autophagic amino acids allows the maintenance of protein synthesis and viability during nitrogen starvation (By similarity).</text>
</comment>
<comment type="subcellular location">
    <subcellularLocation>
        <location evidence="1">Vacuole membrane</location>
        <topology evidence="1">Multi-pass membrane protein</topology>
    </subcellularLocation>
    <text evidence="1">Vacuole and punctate structures.</text>
</comment>
<comment type="similarity">
    <text evidence="4">Belongs to the ATG22 family.</text>
</comment>
<name>AT222_NEOFI</name>
<proteinExistence type="inferred from homology"/>
<protein>
    <recommendedName>
        <fullName>Autophagy-related protein 22-2</fullName>
    </recommendedName>
</protein>
<gene>
    <name type="primary">atg22-2</name>
    <name type="ORF">NFIA_090600</name>
</gene>
<feature type="chain" id="PRO_0000318027" description="Autophagy-related protein 22-2">
    <location>
        <begin position="1"/>
        <end position="613"/>
    </location>
</feature>
<feature type="transmembrane region" description="Helical" evidence="2">
    <location>
        <begin position="41"/>
        <end position="61"/>
    </location>
</feature>
<feature type="transmembrane region" description="Helical" evidence="2">
    <location>
        <begin position="120"/>
        <end position="140"/>
    </location>
</feature>
<feature type="transmembrane region" description="Helical" evidence="2">
    <location>
        <begin position="155"/>
        <end position="177"/>
    </location>
</feature>
<feature type="transmembrane region" description="Helical" evidence="2">
    <location>
        <begin position="189"/>
        <end position="209"/>
    </location>
</feature>
<feature type="transmembrane region" description="Helical" evidence="2">
    <location>
        <begin position="278"/>
        <end position="298"/>
    </location>
</feature>
<feature type="transmembrane region" description="Helical" evidence="2">
    <location>
        <begin position="307"/>
        <end position="327"/>
    </location>
</feature>
<feature type="transmembrane region" description="Helical" evidence="2">
    <location>
        <begin position="382"/>
        <end position="402"/>
    </location>
</feature>
<feature type="transmembrane region" description="Helical" evidence="2">
    <location>
        <begin position="418"/>
        <end position="438"/>
    </location>
</feature>
<feature type="transmembrane region" description="Helical" evidence="2">
    <location>
        <begin position="453"/>
        <end position="473"/>
    </location>
</feature>
<feature type="transmembrane region" description="Helical" evidence="2">
    <location>
        <begin position="488"/>
        <end position="510"/>
    </location>
</feature>
<feature type="transmembrane region" description="Helical" evidence="2">
    <location>
        <begin position="522"/>
        <end position="544"/>
    </location>
</feature>
<feature type="transmembrane region" description="Helical" evidence="2">
    <location>
        <begin position="553"/>
        <end position="573"/>
    </location>
</feature>
<feature type="region of interest" description="Disordered" evidence="3">
    <location>
        <begin position="1"/>
        <end position="28"/>
    </location>
</feature>
<feature type="region of interest" description="Disordered" evidence="3">
    <location>
        <begin position="80"/>
        <end position="99"/>
    </location>
</feature>
<feature type="region of interest" description="Disordered" evidence="3">
    <location>
        <begin position="216"/>
        <end position="257"/>
    </location>
</feature>
<feature type="region of interest" description="Disordered" evidence="3">
    <location>
        <begin position="592"/>
        <end position="613"/>
    </location>
</feature>
<feature type="compositionally biased region" description="Polar residues" evidence="3">
    <location>
        <begin position="80"/>
        <end position="96"/>
    </location>
</feature>
<feature type="compositionally biased region" description="Basic and acidic residues" evidence="3">
    <location>
        <begin position="232"/>
        <end position="250"/>
    </location>
</feature>
<feature type="glycosylation site" description="N-linked (GlcNAc...) asparagine" evidence="2">
    <location>
        <position position="90"/>
    </location>
</feature>
<feature type="glycosylation site" description="N-linked (GlcNAc...) asparagine" evidence="2">
    <location>
        <position position="226"/>
    </location>
</feature>
<feature type="glycosylation site" description="N-linked (GlcNAc...) asparagine" evidence="2">
    <location>
        <position position="448"/>
    </location>
</feature>
<sequence>MVLNSTPPASPGAEAQQRPPRYPGEDTAPTSRKEIWGWYAYGIAAEVFAVCGVGSFLPLTLEQLARERGTLLSSHLPCVGSSSPSTAPGNGTTTATLRRDGTDNDQCVVSVLGLQVNTASFAMYTFSLAVLVQALTLISFSALADYENNRKTLLLAFGFIGSMTSMLFIFIAPPVYILGSLLVVIGVTCLGSSFVVLNSFLPVLVANDPSIQTAHKEEGEELSPVNSSGEFARSEDLDEENVRDSDDHFTTGHGLKTKAAGSASPELQLSTRISSKGVGLGYCAAVLVQILSILMLFALSKTSLPKISGTLPMRFVLLLVGIWWFSFTMVSRRWLRDRPGPPLASSKGAASNSRWRIWLRLIGFAWKSLWKTVKVAVKLREVIVFLIAWFLLSDAMATVSGTAILFARTELKMSTTAVGLLSITATLSGMAGAFLWPVVSRRLRLKSNHTIMLCIALFEVIPLYGMLAYIPLFKKWGVIGLQQPWEIFPLGIVHGLVSGGLSSYCRSFFGLLIPPGSEAAFYALYAATDKGSSFIGPAIVGMLIDATGQVRSGFFFIAVLILLPIPLIWMVNAEKGRQDGLAMADILEKSHGEHASEYGGPSEEAEGLLARDI</sequence>
<dbReference type="EMBL" id="DS027696">
    <property type="protein sequence ID" value="EAW19102.1"/>
    <property type="molecule type" value="Genomic_DNA"/>
</dbReference>
<dbReference type="RefSeq" id="XP_001260999.1">
    <property type="nucleotide sequence ID" value="XM_001260998.1"/>
</dbReference>
<dbReference type="STRING" id="331117.A1DI95"/>
<dbReference type="GlyCosmos" id="A1DI95">
    <property type="glycosylation" value="3 sites, No reported glycans"/>
</dbReference>
<dbReference type="EnsemblFungi" id="EAW19102">
    <property type="protein sequence ID" value="EAW19102"/>
    <property type="gene ID" value="NFIA_090600"/>
</dbReference>
<dbReference type="GeneID" id="4587557"/>
<dbReference type="KEGG" id="nfi:NFIA_090600"/>
<dbReference type="VEuPathDB" id="FungiDB:NFIA_090600"/>
<dbReference type="eggNOG" id="ENOG502QVD3">
    <property type="taxonomic scope" value="Eukaryota"/>
</dbReference>
<dbReference type="HOGENOM" id="CLU_017518_1_0_1"/>
<dbReference type="OMA" id="QPWEIFP"/>
<dbReference type="OrthoDB" id="192733at2759"/>
<dbReference type="Proteomes" id="UP000006702">
    <property type="component" value="Unassembled WGS sequence"/>
</dbReference>
<dbReference type="GO" id="GO:0005774">
    <property type="term" value="C:vacuolar membrane"/>
    <property type="evidence" value="ECO:0007669"/>
    <property type="project" value="UniProtKB-SubCell"/>
</dbReference>
<dbReference type="GO" id="GO:0032974">
    <property type="term" value="P:amino acid transmembrane export from vacuole"/>
    <property type="evidence" value="ECO:0007669"/>
    <property type="project" value="InterPro"/>
</dbReference>
<dbReference type="GO" id="GO:0006914">
    <property type="term" value="P:autophagy"/>
    <property type="evidence" value="ECO:0007669"/>
    <property type="project" value="UniProtKB-KW"/>
</dbReference>
<dbReference type="CDD" id="cd17483">
    <property type="entry name" value="MFS_Atg22_like"/>
    <property type="match status" value="1"/>
</dbReference>
<dbReference type="Gene3D" id="1.20.1250.20">
    <property type="entry name" value="MFS general substrate transporter like domains"/>
    <property type="match status" value="1"/>
</dbReference>
<dbReference type="InterPro" id="IPR044738">
    <property type="entry name" value="Atg22"/>
</dbReference>
<dbReference type="InterPro" id="IPR024671">
    <property type="entry name" value="Atg22-like"/>
</dbReference>
<dbReference type="InterPro" id="IPR050495">
    <property type="entry name" value="ATG22/LtaA_families"/>
</dbReference>
<dbReference type="InterPro" id="IPR036259">
    <property type="entry name" value="MFS_trans_sf"/>
</dbReference>
<dbReference type="PANTHER" id="PTHR23519">
    <property type="entry name" value="AUTOPHAGY-RELATED PROTEIN 22"/>
    <property type="match status" value="1"/>
</dbReference>
<dbReference type="PANTHER" id="PTHR23519:SF3">
    <property type="entry name" value="AUTOPHAGY-RELATED PROTEIN 22-2"/>
    <property type="match status" value="1"/>
</dbReference>
<dbReference type="Pfam" id="PF11700">
    <property type="entry name" value="ATG22"/>
    <property type="match status" value="1"/>
</dbReference>
<dbReference type="SUPFAM" id="SSF103473">
    <property type="entry name" value="MFS general substrate transporter"/>
    <property type="match status" value="1"/>
</dbReference>
<organism>
    <name type="scientific">Neosartorya fischeri (strain ATCC 1020 / DSM 3700 / CBS 544.65 / FGSC A1164 / JCM 1740 / NRRL 181 / WB 181)</name>
    <name type="common">Aspergillus fischerianus</name>
    <dbReference type="NCBI Taxonomy" id="331117"/>
    <lineage>
        <taxon>Eukaryota</taxon>
        <taxon>Fungi</taxon>
        <taxon>Dikarya</taxon>
        <taxon>Ascomycota</taxon>
        <taxon>Pezizomycotina</taxon>
        <taxon>Eurotiomycetes</taxon>
        <taxon>Eurotiomycetidae</taxon>
        <taxon>Eurotiales</taxon>
        <taxon>Aspergillaceae</taxon>
        <taxon>Aspergillus</taxon>
        <taxon>Aspergillus subgen. Fumigati</taxon>
    </lineage>
</organism>
<accession>A1DI95</accession>
<evidence type="ECO:0000250" key="1"/>
<evidence type="ECO:0000255" key="2"/>
<evidence type="ECO:0000256" key="3">
    <source>
        <dbReference type="SAM" id="MobiDB-lite"/>
    </source>
</evidence>
<evidence type="ECO:0000305" key="4"/>
<keyword id="KW-0029">Amino-acid transport</keyword>
<keyword id="KW-0072">Autophagy</keyword>
<keyword id="KW-0325">Glycoprotein</keyword>
<keyword id="KW-0472">Membrane</keyword>
<keyword id="KW-1185">Reference proteome</keyword>
<keyword id="KW-0812">Transmembrane</keyword>
<keyword id="KW-1133">Transmembrane helix</keyword>
<keyword id="KW-0813">Transport</keyword>
<keyword id="KW-0926">Vacuole</keyword>
<reference key="1">
    <citation type="journal article" date="2008" name="PLoS Genet.">
        <title>Genomic islands in the pathogenic filamentous fungus Aspergillus fumigatus.</title>
        <authorList>
            <person name="Fedorova N.D."/>
            <person name="Khaldi N."/>
            <person name="Joardar V.S."/>
            <person name="Maiti R."/>
            <person name="Amedeo P."/>
            <person name="Anderson M.J."/>
            <person name="Crabtree J."/>
            <person name="Silva J.C."/>
            <person name="Badger J.H."/>
            <person name="Albarraq A."/>
            <person name="Angiuoli S."/>
            <person name="Bussey H."/>
            <person name="Bowyer P."/>
            <person name="Cotty P.J."/>
            <person name="Dyer P.S."/>
            <person name="Egan A."/>
            <person name="Galens K."/>
            <person name="Fraser-Liggett C.M."/>
            <person name="Haas B.J."/>
            <person name="Inman J.M."/>
            <person name="Kent R."/>
            <person name="Lemieux S."/>
            <person name="Malavazi I."/>
            <person name="Orvis J."/>
            <person name="Roemer T."/>
            <person name="Ronning C.M."/>
            <person name="Sundaram J.P."/>
            <person name="Sutton G."/>
            <person name="Turner G."/>
            <person name="Venter J.C."/>
            <person name="White O.R."/>
            <person name="Whitty B.R."/>
            <person name="Youngman P."/>
            <person name="Wolfe K.H."/>
            <person name="Goldman G.H."/>
            <person name="Wortman J.R."/>
            <person name="Jiang B."/>
            <person name="Denning D.W."/>
            <person name="Nierman W.C."/>
        </authorList>
    </citation>
    <scope>NUCLEOTIDE SEQUENCE [LARGE SCALE GENOMIC DNA]</scope>
    <source>
        <strain>ATCC 1020 / DSM 3700 / CBS 544.65 / FGSC A1164 / JCM 1740 / NRRL 181 / WB 181</strain>
    </source>
</reference>